<accession>Q5RFN1</accession>
<protein>
    <recommendedName>
        <fullName>Angiotensin-converting enzyme 2</fullName>
        <ecNumber evidence="3">3.4.17.23</ecNumber>
    </recommendedName>
    <alternativeName>
        <fullName>ACE-related carboxypeptidase</fullName>
        <ecNumber evidence="3">3.4.17.-</ecNumber>
    </alternativeName>
    <component>
        <recommendedName>
            <fullName>Processed angiotensin-converting enzyme 2</fullName>
        </recommendedName>
    </component>
</protein>
<organism>
    <name type="scientific">Pongo abelii</name>
    <name type="common">Sumatran orangutan</name>
    <name type="synonym">Pongo pygmaeus abelii</name>
    <dbReference type="NCBI Taxonomy" id="9601"/>
    <lineage>
        <taxon>Eukaryota</taxon>
        <taxon>Metazoa</taxon>
        <taxon>Chordata</taxon>
        <taxon>Craniata</taxon>
        <taxon>Vertebrata</taxon>
        <taxon>Euteleostomi</taxon>
        <taxon>Mammalia</taxon>
        <taxon>Eutheria</taxon>
        <taxon>Euarchontoglires</taxon>
        <taxon>Primates</taxon>
        <taxon>Haplorrhini</taxon>
        <taxon>Catarrhini</taxon>
        <taxon>Hominidae</taxon>
        <taxon>Pongo</taxon>
    </lineage>
</organism>
<comment type="function">
    <text evidence="3">Essential counter-regulatory carboxypeptidase of the renin-angiotensin hormone system that is a critical regulator of blood volume, systemic vascular resistance, and thus cardiovascular homeostasis. Converts angiotensin I to angiotensin 1-9, a nine-amino acid peptide with anti-hypertrophic effects in cardiomyocytes, and angiotensin II to angiotensin 1-7, which then acts as a beneficial vasodilator and anti-proliferation agent, counterbalancing the actions of the vasoconstrictor angiotensin II. Also removes the C-terminal residue from three other vasoactive peptides, neurotensin, kinetensin, and des-Arg bradykinin, but is not active on bradykinin. Also cleaves other biological peptides, such as apelins, casomorphins and dynorphin A. Plays an important role in amino acid transport by acting as binding partner of amino acid transporter SLC6A19 in intestine, regulating trafficking, expression on the cell surface, and its catalytic activity.</text>
</comment>
<comment type="catalytic activity">
    <reaction evidence="3">
        <text>angiotensin II + H2O = angiotensin-(1-7) + L-phenylalanine</text>
        <dbReference type="Rhea" id="RHEA:26554"/>
        <dbReference type="ChEBI" id="CHEBI:15377"/>
        <dbReference type="ChEBI" id="CHEBI:58095"/>
        <dbReference type="ChEBI" id="CHEBI:58506"/>
        <dbReference type="ChEBI" id="CHEBI:58922"/>
        <dbReference type="EC" id="3.4.17.23"/>
    </reaction>
    <physiologicalReaction direction="left-to-right" evidence="3">
        <dbReference type="Rhea" id="RHEA:26555"/>
    </physiologicalReaction>
</comment>
<comment type="catalytic activity">
    <reaction evidence="3">
        <text>angiotensin I + H2O = angiotensin-(1-9) + L-leucine</text>
        <dbReference type="Rhea" id="RHEA:63532"/>
        <dbReference type="ChEBI" id="CHEBI:15377"/>
        <dbReference type="ChEBI" id="CHEBI:57427"/>
        <dbReference type="ChEBI" id="CHEBI:147350"/>
        <dbReference type="ChEBI" id="CHEBI:147351"/>
    </reaction>
    <physiologicalReaction direction="left-to-right" evidence="3">
        <dbReference type="Rhea" id="RHEA:63533"/>
    </physiologicalReaction>
</comment>
<comment type="catalytic activity">
    <reaction evidence="3">
        <text>bradykinin(1-8) + H2O = bradykinin(1-7) + L-phenylalanine</text>
        <dbReference type="Rhea" id="RHEA:63536"/>
        <dbReference type="ChEBI" id="CHEBI:15377"/>
        <dbReference type="ChEBI" id="CHEBI:58095"/>
        <dbReference type="ChEBI" id="CHEBI:133069"/>
        <dbReference type="ChEBI" id="CHEBI:147352"/>
    </reaction>
    <physiologicalReaction direction="left-to-right" evidence="3">
        <dbReference type="Rhea" id="RHEA:63537"/>
    </physiologicalReaction>
</comment>
<comment type="catalytic activity">
    <reaction evidence="3">
        <text>neurotensin + H2O = neurotensin-(1-12) + L-leucine</text>
        <dbReference type="Rhea" id="RHEA:63540"/>
        <dbReference type="ChEBI" id="CHEBI:15377"/>
        <dbReference type="ChEBI" id="CHEBI:57427"/>
        <dbReference type="ChEBI" id="CHEBI:147362"/>
        <dbReference type="ChEBI" id="CHEBI:147363"/>
    </reaction>
    <physiologicalReaction direction="left-to-right" evidence="3">
        <dbReference type="Rhea" id="RHEA:63541"/>
    </physiologicalReaction>
</comment>
<comment type="catalytic activity">
    <reaction evidence="3">
        <text>kinetensin + H2O = kinetensin-(1-8) + L-leucine</text>
        <dbReference type="Rhea" id="RHEA:63544"/>
        <dbReference type="ChEBI" id="CHEBI:15377"/>
        <dbReference type="ChEBI" id="CHEBI:57427"/>
        <dbReference type="ChEBI" id="CHEBI:147364"/>
        <dbReference type="ChEBI" id="CHEBI:147365"/>
    </reaction>
    <physiologicalReaction direction="left-to-right" evidence="3">
        <dbReference type="Rhea" id="RHEA:63545"/>
    </physiologicalReaction>
</comment>
<comment type="catalytic activity">
    <reaction evidence="3">
        <text>dynorphin A-(1-13) + H2O = dynorphin A-(1-12) + L-lysine</text>
        <dbReference type="Rhea" id="RHEA:63556"/>
        <dbReference type="ChEBI" id="CHEBI:15377"/>
        <dbReference type="ChEBI" id="CHEBI:32551"/>
        <dbReference type="ChEBI" id="CHEBI:147381"/>
        <dbReference type="ChEBI" id="CHEBI:147383"/>
    </reaction>
    <physiologicalReaction direction="left-to-right" evidence="3">
        <dbReference type="Rhea" id="RHEA:63557"/>
    </physiologicalReaction>
</comment>
<comment type="catalytic activity">
    <reaction evidence="3">
        <text>apelin-13 + H2O = apelin-12 + L-phenylalanine</text>
        <dbReference type="Rhea" id="RHEA:63564"/>
        <dbReference type="ChEBI" id="CHEBI:15377"/>
        <dbReference type="ChEBI" id="CHEBI:58095"/>
        <dbReference type="ChEBI" id="CHEBI:147395"/>
        <dbReference type="ChEBI" id="CHEBI:147396"/>
    </reaction>
    <physiologicalReaction direction="left-to-right" evidence="3">
        <dbReference type="Rhea" id="RHEA:63565"/>
    </physiologicalReaction>
</comment>
<comment type="catalytic activity">
    <reaction evidence="3">
        <text>[Pyr1]apelin-13 + H2O = [Pyr1]apelin-12 + L-phenylalanine</text>
        <dbReference type="Rhea" id="RHEA:63604"/>
        <dbReference type="ChEBI" id="CHEBI:15377"/>
        <dbReference type="ChEBI" id="CHEBI:58095"/>
        <dbReference type="ChEBI" id="CHEBI:147415"/>
        <dbReference type="ChEBI" id="CHEBI:147416"/>
    </reaction>
    <physiologicalReaction direction="left-to-right" evidence="3">
        <dbReference type="Rhea" id="RHEA:63605"/>
    </physiologicalReaction>
</comment>
<comment type="catalytic activity">
    <reaction evidence="3">
        <text>apelin-17 + H2O = apelin-16 + L-phenylalanine</text>
        <dbReference type="Rhea" id="RHEA:63608"/>
        <dbReference type="ChEBI" id="CHEBI:15377"/>
        <dbReference type="ChEBI" id="CHEBI:58095"/>
        <dbReference type="ChEBI" id="CHEBI:147421"/>
        <dbReference type="ChEBI" id="CHEBI:147422"/>
    </reaction>
    <physiologicalReaction direction="left-to-right" evidence="3">
        <dbReference type="Rhea" id="RHEA:63609"/>
    </physiologicalReaction>
</comment>
<comment type="cofactor">
    <cofactor evidence="1">
        <name>Zn(2+)</name>
        <dbReference type="ChEBI" id="CHEBI:29105"/>
    </cofactor>
    <text evidence="1">Binds 1 zinc ion per subunit.</text>
</comment>
<comment type="cofactor">
    <cofactor evidence="1">
        <name>chloride</name>
        <dbReference type="ChEBI" id="CHEBI:17996"/>
    </cofactor>
    <text evidence="1">Binds 1 Cl(-) ion per subunit.</text>
</comment>
<comment type="subunit">
    <text evidence="2 3">Homodimer. Interacts with the catalytically active form of TMPRSS2 (By similarity). Interacts with SLC6A19; this interaction is essential for expression and function of SLC6A19 in intestine (By similarity). Interacts with ITGA5:ITGB1 (By similarity). Probably interacts (via endocytic sorting signal motif) with AP2M1; the interaction is inhibited by phosphorylation of Tyr-781 (By similarity). Interacts (via PDZ-binding motif) with NHERF1 (via PDZ domains); the interaction may enhance ACE2 membrane residence (By similarity).</text>
</comment>
<comment type="subcellular location">
    <molecule>Processed angiotensin-converting enzyme 2</molecule>
    <subcellularLocation>
        <location evidence="1">Secreted</location>
    </subcellularLocation>
</comment>
<comment type="subcellular location">
    <subcellularLocation>
        <location evidence="3">Cell membrane</location>
        <topology evidence="4">Single-pass type I membrane protein</topology>
    </subcellularLocation>
    <subcellularLocation>
        <location evidence="2">Cytoplasm</location>
    </subcellularLocation>
    <subcellularLocation>
        <location evidence="3">Cell projection</location>
        <location evidence="3">Cilium</location>
    </subcellularLocation>
    <subcellularLocation>
        <location evidence="3">Apical cell membrane</location>
    </subcellularLocation>
    <text evidence="2">Detected in both cell membrane and cytoplasm in neurons.</text>
</comment>
<comment type="domain">
    <text evidence="3">The cytoplasmic tail contains several linear motifs such as LIR, PDZ-binding, PTB and endocytic sorting signal motifs that would allow interaction with proteins that mediate endocytic trafficking and autophagy.</text>
</comment>
<comment type="PTM">
    <text evidence="1">Proteolytic cleavage by ADAM17 generates a secreted form. Also cleaved by serine proteases: TMPRSS2, TMPRSS11D and HPN/TMPRSS1 (By similarity).</text>
</comment>
<comment type="PTM">
    <text evidence="3">Phosphorylated. Phosphorylation at Tyr-781 probably inhibits interaction with AP2M1 and enables interactions with proteins containing SH2 domains.</text>
</comment>
<comment type="PTM">
    <text evidence="3">Ubiquitinated. Ubiquitinated on Lys-788 via 'Lys-48'-linked ubiquitin. 'Lys-48'-linked deubiquitinated by USP50 on the Lys-788; leading to its stabilization.</text>
</comment>
<comment type="similarity">
    <text evidence="8">Belongs to the peptidase M2 family.</text>
</comment>
<proteinExistence type="evidence at transcript level"/>
<dbReference type="EC" id="3.4.17.23" evidence="3"/>
<dbReference type="EC" id="3.4.17.-" evidence="3"/>
<dbReference type="EMBL" id="CR857122">
    <property type="protein sequence ID" value="CAH89426.1"/>
    <property type="molecule type" value="mRNA"/>
</dbReference>
<dbReference type="RefSeq" id="NP_001124604.1">
    <property type="nucleotide sequence ID" value="NM_001131132.2"/>
</dbReference>
<dbReference type="SMR" id="Q5RFN1"/>
<dbReference type="FunCoup" id="Q5RFN1">
    <property type="interactions" value="273"/>
</dbReference>
<dbReference type="STRING" id="9601.ENSPPYP00000022536"/>
<dbReference type="MEROPS" id="M02.006"/>
<dbReference type="GlyCosmos" id="Q5RFN1">
    <property type="glycosylation" value="7 sites, No reported glycans"/>
</dbReference>
<dbReference type="GeneID" id="100171441"/>
<dbReference type="KEGG" id="pon:100171441"/>
<dbReference type="CTD" id="59272"/>
<dbReference type="eggNOG" id="KOG3690">
    <property type="taxonomic scope" value="Eukaryota"/>
</dbReference>
<dbReference type="InParanoid" id="Q5RFN1"/>
<dbReference type="OrthoDB" id="10029630at2759"/>
<dbReference type="Proteomes" id="UP000001595">
    <property type="component" value="Unplaced"/>
</dbReference>
<dbReference type="GO" id="GO:0016324">
    <property type="term" value="C:apical plasma membrane"/>
    <property type="evidence" value="ECO:0007669"/>
    <property type="project" value="UniProtKB-SubCell"/>
</dbReference>
<dbReference type="GO" id="GO:0009986">
    <property type="term" value="C:cell surface"/>
    <property type="evidence" value="ECO:0000250"/>
    <property type="project" value="UniProtKB"/>
</dbReference>
<dbReference type="GO" id="GO:0005929">
    <property type="term" value="C:cilium"/>
    <property type="evidence" value="ECO:0007669"/>
    <property type="project" value="UniProtKB-SubCell"/>
</dbReference>
<dbReference type="GO" id="GO:0005737">
    <property type="term" value="C:cytoplasm"/>
    <property type="evidence" value="ECO:0007669"/>
    <property type="project" value="UniProtKB-SubCell"/>
</dbReference>
<dbReference type="GO" id="GO:0005615">
    <property type="term" value="C:extracellular space"/>
    <property type="evidence" value="ECO:0007669"/>
    <property type="project" value="TreeGrafter"/>
</dbReference>
<dbReference type="GO" id="GO:0005886">
    <property type="term" value="C:plasma membrane"/>
    <property type="evidence" value="ECO:0000250"/>
    <property type="project" value="UniProtKB"/>
</dbReference>
<dbReference type="GO" id="GO:0004180">
    <property type="term" value="F:carboxypeptidase activity"/>
    <property type="evidence" value="ECO:0007669"/>
    <property type="project" value="UniProtKB-KW"/>
</dbReference>
<dbReference type="GO" id="GO:0046872">
    <property type="term" value="F:metal ion binding"/>
    <property type="evidence" value="ECO:0007669"/>
    <property type="project" value="UniProtKB-KW"/>
</dbReference>
<dbReference type="GO" id="GO:0008237">
    <property type="term" value="F:metallopeptidase activity"/>
    <property type="evidence" value="ECO:0007669"/>
    <property type="project" value="UniProtKB-KW"/>
</dbReference>
<dbReference type="GO" id="GO:0008241">
    <property type="term" value="F:peptidyl-dipeptidase activity"/>
    <property type="evidence" value="ECO:0007669"/>
    <property type="project" value="InterPro"/>
</dbReference>
<dbReference type="GO" id="GO:0001618">
    <property type="term" value="F:virus receptor activity"/>
    <property type="evidence" value="ECO:0000250"/>
    <property type="project" value="UniProtKB"/>
</dbReference>
<dbReference type="GO" id="GO:0006508">
    <property type="term" value="P:proteolysis"/>
    <property type="evidence" value="ECO:0007669"/>
    <property type="project" value="UniProtKB-KW"/>
</dbReference>
<dbReference type="CDD" id="cd06461">
    <property type="entry name" value="M2_ACE"/>
    <property type="match status" value="1"/>
</dbReference>
<dbReference type="FunFam" id="1.10.1370.30:FF:000001">
    <property type="entry name" value="Angiotensin-converting enzyme"/>
    <property type="match status" value="1"/>
</dbReference>
<dbReference type="Gene3D" id="1.10.1370.30">
    <property type="match status" value="1"/>
</dbReference>
<dbReference type="InterPro" id="IPR031588">
    <property type="entry name" value="Collectrin_dom"/>
</dbReference>
<dbReference type="InterPro" id="IPR001548">
    <property type="entry name" value="Peptidase_M2"/>
</dbReference>
<dbReference type="PANTHER" id="PTHR10514">
    <property type="entry name" value="ANGIOTENSIN-CONVERTING ENZYME"/>
    <property type="match status" value="1"/>
</dbReference>
<dbReference type="PANTHER" id="PTHR10514:SF24">
    <property type="entry name" value="ANGIOTENSIN-CONVERTING ENZYME 2"/>
    <property type="match status" value="1"/>
</dbReference>
<dbReference type="Pfam" id="PF16959">
    <property type="entry name" value="Collectrin"/>
    <property type="match status" value="1"/>
</dbReference>
<dbReference type="Pfam" id="PF01401">
    <property type="entry name" value="Peptidase_M2"/>
    <property type="match status" value="1"/>
</dbReference>
<dbReference type="PRINTS" id="PR00791">
    <property type="entry name" value="PEPDIPTASEA"/>
</dbReference>
<dbReference type="SUPFAM" id="SSF55486">
    <property type="entry name" value="Metalloproteases ('zincins'), catalytic domain"/>
    <property type="match status" value="1"/>
</dbReference>
<dbReference type="PROSITE" id="PS52010">
    <property type="entry name" value="COLLECTRIN_LIKE"/>
    <property type="match status" value="1"/>
</dbReference>
<dbReference type="PROSITE" id="PS52011">
    <property type="entry name" value="PEPTIDASE_M2"/>
    <property type="match status" value="1"/>
</dbReference>
<dbReference type="PROSITE" id="PS00142">
    <property type="entry name" value="ZINC_PROTEASE"/>
    <property type="match status" value="1"/>
</dbReference>
<gene>
    <name type="primary">ACE2</name>
</gene>
<feature type="signal peptide" evidence="4">
    <location>
        <begin position="1"/>
        <end position="17"/>
    </location>
</feature>
<feature type="chain" id="PRO_0000028573" description="Angiotensin-converting enzyme 2">
    <location>
        <begin position="18"/>
        <end position="805"/>
    </location>
</feature>
<feature type="chain" id="PRO_0000292271" description="Processed angiotensin-converting enzyme 2">
    <location>
        <begin position="18"/>
        <end position="708"/>
    </location>
</feature>
<feature type="topological domain" description="Extracellular" evidence="4">
    <location>
        <begin position="18"/>
        <end position="740"/>
    </location>
</feature>
<feature type="transmembrane region" description="Helical" evidence="5">
    <location>
        <begin position="741"/>
        <end position="761"/>
    </location>
</feature>
<feature type="topological domain" description="Cytoplasmic" evidence="4">
    <location>
        <begin position="762"/>
        <end position="805"/>
    </location>
</feature>
<feature type="domain" description="Peptidase M2" evidence="6">
    <location>
        <begin position="19"/>
        <end position="607"/>
    </location>
</feature>
<feature type="domain" description="Collectrin-like" evidence="5">
    <location>
        <begin position="614"/>
        <end position="805"/>
    </location>
</feature>
<feature type="region of interest" description="Essential for cleavage by ADAM17" evidence="1">
    <location>
        <begin position="652"/>
        <end position="659"/>
    </location>
</feature>
<feature type="region of interest" description="Essential for cleavage by TMPRSS11D and TMPRSS2" evidence="1">
    <location>
        <begin position="697"/>
        <end position="716"/>
    </location>
</feature>
<feature type="region of interest" description="Disordered" evidence="7">
    <location>
        <begin position="772"/>
        <end position="805"/>
    </location>
</feature>
<feature type="short sequence motif" description="LIR" evidence="3">
    <location>
        <begin position="778"/>
        <end position="786"/>
    </location>
</feature>
<feature type="short sequence motif" description="SH2-binding" evidence="3">
    <location>
        <begin position="781"/>
        <end position="785"/>
    </location>
</feature>
<feature type="short sequence motif" description="Endocytic sorting signal" evidence="3">
    <location>
        <begin position="781"/>
        <end position="784"/>
    </location>
</feature>
<feature type="short sequence motif" description="PTB" evidence="3">
    <location>
        <begin position="792"/>
        <end position="795"/>
    </location>
</feature>
<feature type="short sequence motif" description="PDZ-binding" evidence="3">
    <location>
        <begin position="803"/>
        <end position="805"/>
    </location>
</feature>
<feature type="compositionally biased region" description="Polar residues" evidence="7">
    <location>
        <begin position="789"/>
        <end position="805"/>
    </location>
</feature>
<feature type="active site" description="Proton acceptor" evidence="6">
    <location>
        <position position="375"/>
    </location>
</feature>
<feature type="active site" description="Proton donor" evidence="6">
    <location>
        <position position="505"/>
    </location>
</feature>
<feature type="binding site" evidence="6">
    <location>
        <position position="169"/>
    </location>
    <ligand>
        <name>chloride</name>
        <dbReference type="ChEBI" id="CHEBI:17996"/>
    </ligand>
</feature>
<feature type="binding site" evidence="3">
    <location>
        <position position="273"/>
    </location>
    <ligand>
        <name>substrate</name>
    </ligand>
</feature>
<feature type="binding site" evidence="3">
    <location>
        <begin position="345"/>
        <end position="346"/>
    </location>
    <ligand>
        <name>substrate</name>
    </ligand>
</feature>
<feature type="binding site" evidence="6">
    <location>
        <position position="374"/>
    </location>
    <ligand>
        <name>Zn(2+)</name>
        <dbReference type="ChEBI" id="CHEBI:29105"/>
        <note>catalytic</note>
    </ligand>
</feature>
<feature type="binding site" evidence="6">
    <location>
        <position position="378"/>
    </location>
    <ligand>
        <name>Zn(2+)</name>
        <dbReference type="ChEBI" id="CHEBI:29105"/>
        <note>catalytic</note>
    </ligand>
</feature>
<feature type="binding site" evidence="6">
    <location>
        <position position="402"/>
    </location>
    <ligand>
        <name>Zn(2+)</name>
        <dbReference type="ChEBI" id="CHEBI:29105"/>
        <note>catalytic</note>
    </ligand>
</feature>
<feature type="binding site" evidence="6">
    <location>
        <position position="477"/>
    </location>
    <ligand>
        <name>chloride</name>
        <dbReference type="ChEBI" id="CHEBI:17996"/>
    </ligand>
</feature>
<feature type="binding site" evidence="6">
    <location>
        <position position="481"/>
    </location>
    <ligand>
        <name>chloride</name>
        <dbReference type="ChEBI" id="CHEBI:17996"/>
    </ligand>
</feature>
<feature type="binding site" evidence="3">
    <location>
        <position position="515"/>
    </location>
    <ligand>
        <name>substrate</name>
    </ligand>
</feature>
<feature type="modified residue" description="Phosphotyrosine" evidence="3">
    <location>
        <position position="781"/>
    </location>
</feature>
<feature type="modified residue" description="Phosphoserine" evidence="3">
    <location>
        <position position="783"/>
    </location>
</feature>
<feature type="glycosylation site" description="N-linked (GlcNAc...) asparagine" evidence="4">
    <location>
        <position position="53"/>
    </location>
</feature>
<feature type="glycosylation site" description="N-linked (GlcNAc...) asparagine" evidence="4">
    <location>
        <position position="90"/>
    </location>
</feature>
<feature type="glycosylation site" description="N-linked (GlcNAc...) asparagine" evidence="4">
    <location>
        <position position="103"/>
    </location>
</feature>
<feature type="glycosylation site" description="N-linked (GlcNAc...) asparagine" evidence="4">
    <location>
        <position position="322"/>
    </location>
</feature>
<feature type="glycosylation site" description="N-linked (GlcNAc...) asparagine" evidence="4">
    <location>
        <position position="432"/>
    </location>
</feature>
<feature type="glycosylation site" description="N-linked (GlcNAc...) asparagine" evidence="4">
    <location>
        <position position="546"/>
    </location>
</feature>
<feature type="glycosylation site" description="N-linked (GlcNAc...) asparagine" evidence="4">
    <location>
        <position position="690"/>
    </location>
</feature>
<feature type="disulfide bond" evidence="6">
    <location>
        <begin position="133"/>
        <end position="141"/>
    </location>
</feature>
<feature type="disulfide bond" evidence="6">
    <location>
        <begin position="344"/>
        <end position="361"/>
    </location>
</feature>
<feature type="disulfide bond" evidence="6">
    <location>
        <begin position="530"/>
        <end position="542"/>
    </location>
</feature>
<feature type="cross-link" description="Glycyl lysine isopeptide (Lys-Gly) (interchain with G-Cter in ubiquitin)" evidence="3">
    <location>
        <position position="788"/>
    </location>
</feature>
<evidence type="ECO:0000250" key="1"/>
<evidence type="ECO:0000250" key="2">
    <source>
        <dbReference type="UniProtKB" id="Q8R0I0"/>
    </source>
</evidence>
<evidence type="ECO:0000250" key="3">
    <source>
        <dbReference type="UniProtKB" id="Q9BYF1"/>
    </source>
</evidence>
<evidence type="ECO:0000255" key="4"/>
<evidence type="ECO:0000255" key="5">
    <source>
        <dbReference type="PROSITE-ProRule" id="PRU01354"/>
    </source>
</evidence>
<evidence type="ECO:0000255" key="6">
    <source>
        <dbReference type="PROSITE-ProRule" id="PRU01355"/>
    </source>
</evidence>
<evidence type="ECO:0000256" key="7">
    <source>
        <dbReference type="SAM" id="MobiDB-lite"/>
    </source>
</evidence>
<evidence type="ECO:0000305" key="8"/>
<sequence length="805" mass="92605">MSGSSWLLLSLVAVTAAQSTIEEQAKTFLDKFNHEAEDLFYQSSLASWNYNTNITEENVQNMNNAGDKWSAFLKEQSTLAQMYPLQEIQNLTVKLQLQALQQNGSSVLSEDKSKRLNTILNTMSTIYSTGKVCNPNNPQECLLLEPGLNEIMANSLDYNERLWAWESWRSEVGKQLRPLYEEYVVLKNEMARANHYEDYGDYWRGDYEVNGVDSYDYSRGQLIEDVEHTFEEIKPLYEHLHAYVRAKLINAYPSYISPIGCLPAHLLGDMWGRFWTNLYSLTVPFGQKPNIDVTDAMVDQAWDAQRIFKEAEKFFVSVGLPNMTQRFWENSMLTDPGNVQKVVCHPTAWDLGKGDFRILMCTKVTMDDFLTAHHEMGHIQYDMAYAAQPFLLRNGANEGFHEAVGEIMSLSAATPKHLKSIGLLSPDFQEDNETEINFLLKQALTIVGTLPFTYMLEKWRWMVFKGEIPKDQWMKKWWEMKREIVGVVEPVPHDETYCDPASLFHVSNDYSFIRYYTRTLYQFQFQEALCQAAKHEGPLHKCDISNSTEAGQKLLNMLRLGKSEPWTLALENVVGAKNMNVRPLLDYFEPLFTWLKDQNKNSFVGWSTDWSPYADQSIKVRISLKSALGNKAYEWNDNEIYLFRSSVAYAMRKYFLEVKNQMILFGEEDVRVANLKPRISFNFFVTAPKNVSDIIPRTEVEKAIRMSRSRINDAFRLNDNSLEFLGIQPTLGPPNQPPVSIWLIVFGVVMGVIVVGIVVLIFTGIRDRKKKNKARNEENPYASIDISKGENNPGFQNTDDVQTSF</sequence>
<name>ACE2_PONAB</name>
<keyword id="KW-0121">Carboxypeptidase</keyword>
<keyword id="KW-1003">Cell membrane</keyword>
<keyword id="KW-0966">Cell projection</keyword>
<keyword id="KW-0868">Chloride</keyword>
<keyword id="KW-0963">Cytoplasm</keyword>
<keyword id="KW-1015">Disulfide bond</keyword>
<keyword id="KW-0325">Glycoprotein</keyword>
<keyword id="KW-0378">Hydrolase</keyword>
<keyword id="KW-1017">Isopeptide bond</keyword>
<keyword id="KW-0472">Membrane</keyword>
<keyword id="KW-0479">Metal-binding</keyword>
<keyword id="KW-0482">Metalloprotease</keyword>
<keyword id="KW-0597">Phosphoprotein</keyword>
<keyword id="KW-0645">Protease</keyword>
<keyword id="KW-1185">Reference proteome</keyword>
<keyword id="KW-0964">Secreted</keyword>
<keyword id="KW-0732">Signal</keyword>
<keyword id="KW-0812">Transmembrane</keyword>
<keyword id="KW-1133">Transmembrane helix</keyword>
<keyword id="KW-0832">Ubl conjugation</keyword>
<keyword id="KW-0862">Zinc</keyword>
<reference key="1">
    <citation type="submission" date="2004-11" db="EMBL/GenBank/DDBJ databases">
        <authorList>
            <consortium name="The German cDNA consortium"/>
        </authorList>
    </citation>
    <scope>NUCLEOTIDE SEQUENCE [LARGE SCALE MRNA]</scope>
    <source>
        <tissue>Kidney</tissue>
    </source>
</reference>